<sequence>MIKLRLKRFGKKRETSFRLVACNSTSRRDGRPLQELGFYNPRTKETRLDTEALRTRLGQGAQPTDAVRTLLEKGGLLEKKVRPAEVLGKQKQEKERSAKKKDATASETSE</sequence>
<proteinExistence type="inferred from homology"/>
<reference key="1">
    <citation type="journal article" date="2007" name="PLoS Genet.">
        <title>Patterns and implications of gene gain and loss in the evolution of Prochlorococcus.</title>
        <authorList>
            <person name="Kettler G.C."/>
            <person name="Martiny A.C."/>
            <person name="Huang K."/>
            <person name="Zucker J."/>
            <person name="Coleman M.L."/>
            <person name="Rodrigue S."/>
            <person name="Chen F."/>
            <person name="Lapidus A."/>
            <person name="Ferriera S."/>
            <person name="Johnson J."/>
            <person name="Steglich C."/>
            <person name="Church G.M."/>
            <person name="Richardson P."/>
            <person name="Chisholm S.W."/>
        </authorList>
    </citation>
    <scope>NUCLEOTIDE SEQUENCE [LARGE SCALE GENOMIC DNA]</scope>
    <source>
        <strain>NATL1A</strain>
    </source>
</reference>
<protein>
    <recommendedName>
        <fullName evidence="1">Small ribosomal subunit protein bS16</fullName>
    </recommendedName>
    <alternativeName>
        <fullName evidence="3">30S ribosomal protein S16</fullName>
    </alternativeName>
</protein>
<comment type="similarity">
    <text evidence="1">Belongs to the bacterial ribosomal protein bS16 family.</text>
</comment>
<organism>
    <name type="scientific">Prochlorococcus marinus (strain NATL1A)</name>
    <dbReference type="NCBI Taxonomy" id="167555"/>
    <lineage>
        <taxon>Bacteria</taxon>
        <taxon>Bacillati</taxon>
        <taxon>Cyanobacteriota</taxon>
        <taxon>Cyanophyceae</taxon>
        <taxon>Synechococcales</taxon>
        <taxon>Prochlorococcaceae</taxon>
        <taxon>Prochlorococcus</taxon>
    </lineage>
</organism>
<evidence type="ECO:0000255" key="1">
    <source>
        <dbReference type="HAMAP-Rule" id="MF_00385"/>
    </source>
</evidence>
<evidence type="ECO:0000256" key="2">
    <source>
        <dbReference type="SAM" id="MobiDB-lite"/>
    </source>
</evidence>
<evidence type="ECO:0000305" key="3"/>
<name>RS16_PROM1</name>
<keyword id="KW-0687">Ribonucleoprotein</keyword>
<keyword id="KW-0689">Ribosomal protein</keyword>
<gene>
    <name evidence="1" type="primary">rpsP</name>
    <name evidence="1" type="synonym">rps16</name>
    <name type="ordered locus">NATL1_17051</name>
</gene>
<feature type="chain" id="PRO_1000049314" description="Small ribosomal subunit protein bS16">
    <location>
        <begin position="1"/>
        <end position="110"/>
    </location>
</feature>
<feature type="region of interest" description="Disordered" evidence="2">
    <location>
        <begin position="81"/>
        <end position="110"/>
    </location>
</feature>
<feature type="compositionally biased region" description="Basic and acidic residues" evidence="2">
    <location>
        <begin position="81"/>
        <end position="104"/>
    </location>
</feature>
<accession>A2C451</accession>
<dbReference type="EMBL" id="CP000553">
    <property type="protein sequence ID" value="ABM76261.1"/>
    <property type="molecule type" value="Genomic_DNA"/>
</dbReference>
<dbReference type="RefSeq" id="WP_011824263.1">
    <property type="nucleotide sequence ID" value="NC_008819.1"/>
</dbReference>
<dbReference type="SMR" id="A2C451"/>
<dbReference type="KEGG" id="pme:NATL1_17051"/>
<dbReference type="eggNOG" id="COG0228">
    <property type="taxonomic scope" value="Bacteria"/>
</dbReference>
<dbReference type="HOGENOM" id="CLU_100590_3_2_3"/>
<dbReference type="Proteomes" id="UP000002592">
    <property type="component" value="Chromosome"/>
</dbReference>
<dbReference type="GO" id="GO:0005737">
    <property type="term" value="C:cytoplasm"/>
    <property type="evidence" value="ECO:0007669"/>
    <property type="project" value="UniProtKB-ARBA"/>
</dbReference>
<dbReference type="GO" id="GO:0015935">
    <property type="term" value="C:small ribosomal subunit"/>
    <property type="evidence" value="ECO:0007669"/>
    <property type="project" value="TreeGrafter"/>
</dbReference>
<dbReference type="GO" id="GO:0003735">
    <property type="term" value="F:structural constituent of ribosome"/>
    <property type="evidence" value="ECO:0007669"/>
    <property type="project" value="InterPro"/>
</dbReference>
<dbReference type="GO" id="GO:0006412">
    <property type="term" value="P:translation"/>
    <property type="evidence" value="ECO:0007669"/>
    <property type="project" value="UniProtKB-UniRule"/>
</dbReference>
<dbReference type="Gene3D" id="3.30.1320.10">
    <property type="match status" value="1"/>
</dbReference>
<dbReference type="HAMAP" id="MF_00385">
    <property type="entry name" value="Ribosomal_bS16"/>
    <property type="match status" value="1"/>
</dbReference>
<dbReference type="InterPro" id="IPR000307">
    <property type="entry name" value="Ribosomal_bS16"/>
</dbReference>
<dbReference type="InterPro" id="IPR020592">
    <property type="entry name" value="Ribosomal_bS16_CS"/>
</dbReference>
<dbReference type="InterPro" id="IPR023803">
    <property type="entry name" value="Ribosomal_bS16_dom_sf"/>
</dbReference>
<dbReference type="NCBIfam" id="TIGR00002">
    <property type="entry name" value="S16"/>
    <property type="match status" value="1"/>
</dbReference>
<dbReference type="PANTHER" id="PTHR12919">
    <property type="entry name" value="30S RIBOSOMAL PROTEIN S16"/>
    <property type="match status" value="1"/>
</dbReference>
<dbReference type="PANTHER" id="PTHR12919:SF20">
    <property type="entry name" value="SMALL RIBOSOMAL SUBUNIT PROTEIN BS16M"/>
    <property type="match status" value="1"/>
</dbReference>
<dbReference type="Pfam" id="PF00886">
    <property type="entry name" value="Ribosomal_S16"/>
    <property type="match status" value="1"/>
</dbReference>
<dbReference type="SUPFAM" id="SSF54565">
    <property type="entry name" value="Ribosomal protein S16"/>
    <property type="match status" value="1"/>
</dbReference>
<dbReference type="PROSITE" id="PS00732">
    <property type="entry name" value="RIBOSOMAL_S16"/>
    <property type="match status" value="1"/>
</dbReference>